<evidence type="ECO:0000255" key="1">
    <source>
        <dbReference type="HAMAP-Rule" id="MF_04014"/>
    </source>
</evidence>
<name>TRM1_ALHV1</name>
<reference key="1">
    <citation type="journal article" date="1997" name="J. Virol.">
        <title>Primary structure of the alcelaphine herpesvirus 1 genome.</title>
        <authorList>
            <person name="Ensser A."/>
            <person name="Pflanz R."/>
            <person name="Fleckenstein B."/>
        </authorList>
    </citation>
    <scope>NUCLEOTIDE SEQUENCE [LARGE SCALE GENOMIC DNA]</scope>
</reference>
<organism>
    <name type="scientific">Alcelaphine herpesvirus 1 (strain C500)</name>
    <name type="common">AlHV-1</name>
    <name type="synonym">Malignant catarrhal fever virus</name>
    <dbReference type="NCBI Taxonomy" id="654901"/>
    <lineage>
        <taxon>Viruses</taxon>
        <taxon>Duplodnaviria</taxon>
        <taxon>Heunggongvirae</taxon>
        <taxon>Peploviricota</taxon>
        <taxon>Herviviricetes</taxon>
        <taxon>Herpesvirales</taxon>
        <taxon>Orthoherpesviridae</taxon>
        <taxon>Gammaherpesvirinae</taxon>
        <taxon>Macavirus</taxon>
        <taxon>Macavirus alcelaphinegamma1</taxon>
    </lineage>
</organism>
<proteinExistence type="inferred from homology"/>
<gene>
    <name evidence="1" type="primary">TRM1</name>
    <name type="ordered locus">7</name>
</gene>
<keyword id="KW-0067">ATP-binding</keyword>
<keyword id="KW-1048">Host nucleus</keyword>
<keyword id="KW-0426">Late protein</keyword>
<keyword id="KW-0479">Metal-binding</keyword>
<keyword id="KW-0547">Nucleotide-binding</keyword>
<keyword id="KW-1185">Reference proteome</keyword>
<keyword id="KW-0231">Viral genome packaging</keyword>
<keyword id="KW-1188">Viral release from host cell</keyword>
<keyword id="KW-0862">Zinc</keyword>
<keyword id="KW-0863">Zinc-finger</keyword>
<feature type="chain" id="PRO_0000405759" description="Tripartite terminase subunit 1">
    <location>
        <begin position="1"/>
        <end position="680"/>
    </location>
</feature>
<feature type="zinc finger region" description="C3H1-type" evidence="1">
    <location>
        <begin position="180"/>
        <end position="208"/>
    </location>
</feature>
<feature type="binding site" evidence="1">
    <location>
        <begin position="610"/>
        <end position="617"/>
    </location>
    <ligand>
        <name>ATP</name>
        <dbReference type="ChEBI" id="CHEBI:30616"/>
    </ligand>
</feature>
<comment type="function">
    <text evidence="1">Component of the molecular motor that translocates viral genomic DNA in empty capsid during DNA packaging. Forms a tripartite terminase complex together with TRM2 and TRM3 in the host cytoplasm. Once the complex reaches the host nucleus, it interacts with the capsid portal vertex. This portal forms a ring in which genomic DNA is translocated into the capsid. TRM1 carries an endonuclease activity that plays an important role for the cleavage of concatemeric viral DNA into unit length genomes.</text>
</comment>
<comment type="subunit">
    <text evidence="1">Associates with TRM2 and TRM3 to form the tripartite terminase complex. Interacts with portal protein.</text>
</comment>
<comment type="subcellular location">
    <subcellularLocation>
        <location evidence="1">Host nucleus</location>
    </subcellularLocation>
    <text evidence="1">Found associated with the external surface of the viral capsid during assembly and DNA packaging, but seems absent in extracellular mature virions.</text>
</comment>
<comment type="similarity">
    <text evidence="1">Belongs to the herpesviridae TRM1 protein family.</text>
</comment>
<accession>O36361</accession>
<sequence length="680" mass="77179">MGQYLAALYSQIYGLCLDVSLVEFCKPTSLCLTKIADACNKVHKIHEYVSASLLQQNSLEACALSLELSHLLENLKTRLFFIYHALLDNPTYFSKLHSSVGLCDLHKKLNVQFYNECGIEVNLTLINDIERFLSRLNCVFYCLSSSSALLALKEALTFLGQLRGISPVPRTDIYITSSSCLECVLETSVVPNQGETLNELLLNHNCHHLVERVPPEPIKGLFESELQNLGLKVHIATDTIEQSVGKHEAVLQESLAYLKAHTIFNNTPKQVLELSNLLYWNSGQNQPSDSGVKCSELSKIWSRENELQKYRPKLNNGEPPGHFFDLHSPQGTELLFCGGIFSSTHDTITALKQDCSNTFMKQTRLTGVAKRQNELFMRLSNILYGEEVPTKPKQTESALKTCDQSDASKNQVLQEAELRKEAYLNKLSKEGFRKLQACLSTHEEMLNSQLSLKIWGSVVYKQSATLLNHFLFRQSWVTQASLPPSVNGSPEQFENSKFIKSSLYVKSLSREYLSTLRLHFFALITGPLTTQEGLFPSPPNVQLAHCLEAAHFMPHQKMLLNEMIKPTMEPQDWICSNFNEFYTIHETDLNGVQYECWKYLRELVLSVALYNITWEKNLCIYRTDHSCPTACSSGIKEGLYVTYESHAPLILVYSNKKWIFKDLYALLYAHMQLANNGAHR</sequence>
<dbReference type="EMBL" id="AF005370">
    <property type="protein sequence ID" value="AAC58058.1"/>
    <property type="molecule type" value="Genomic_DNA"/>
</dbReference>
<dbReference type="PIR" id="T03106">
    <property type="entry name" value="T03106"/>
</dbReference>
<dbReference type="RefSeq" id="NP_065510.1">
    <property type="nucleotide sequence ID" value="NC_002531.1"/>
</dbReference>
<dbReference type="SMR" id="O36361"/>
<dbReference type="KEGG" id="vg:911746"/>
<dbReference type="Proteomes" id="UP000000941">
    <property type="component" value="Segment"/>
</dbReference>
<dbReference type="GO" id="GO:0042025">
    <property type="term" value="C:host cell nucleus"/>
    <property type="evidence" value="ECO:0007669"/>
    <property type="project" value="UniProtKB-SubCell"/>
</dbReference>
<dbReference type="GO" id="GO:0005524">
    <property type="term" value="F:ATP binding"/>
    <property type="evidence" value="ECO:0007669"/>
    <property type="project" value="UniProtKB-KW"/>
</dbReference>
<dbReference type="GO" id="GO:0008270">
    <property type="term" value="F:zinc ion binding"/>
    <property type="evidence" value="ECO:0007669"/>
    <property type="project" value="UniProtKB-KW"/>
</dbReference>
<dbReference type="GO" id="GO:0019073">
    <property type="term" value="P:viral DNA genome packaging"/>
    <property type="evidence" value="ECO:0007669"/>
    <property type="project" value="InterPro"/>
</dbReference>
<dbReference type="HAMAP" id="MF_04014">
    <property type="entry name" value="HSV_TRM1"/>
    <property type="match status" value="1"/>
</dbReference>
<dbReference type="InterPro" id="IPR000501">
    <property type="entry name" value="UL28/UL56"/>
</dbReference>
<dbReference type="Pfam" id="PF01366">
    <property type="entry name" value="PRTP"/>
    <property type="match status" value="1"/>
</dbReference>
<organismHost>
    <name type="scientific">Connochaetes taurinus</name>
    <name type="common">Blue wildebeest</name>
    <dbReference type="NCBI Taxonomy" id="9927"/>
</organismHost>
<protein>
    <recommendedName>
        <fullName evidence="1">Tripartite terminase subunit 1</fullName>
    </recommendedName>
</protein>